<feature type="chain" id="PRO_0000226359" description="Ankyrin repeat, SAM and basic leucine zipper domain-containing protein 1">
    <location>
        <begin position="1"/>
        <end position="475"/>
    </location>
</feature>
<feature type="repeat" description="ANK 1">
    <location>
        <begin position="45"/>
        <end position="74"/>
    </location>
</feature>
<feature type="repeat" description="ANK 2">
    <location>
        <begin position="78"/>
        <end position="107"/>
    </location>
</feature>
<feature type="repeat" description="ANK 3">
    <location>
        <begin position="110"/>
        <end position="144"/>
    </location>
</feature>
<feature type="repeat" description="ANK 4">
    <location>
        <begin position="148"/>
        <end position="177"/>
    </location>
</feature>
<feature type="repeat" description="ANK 5">
    <location>
        <begin position="181"/>
        <end position="210"/>
    </location>
</feature>
<feature type="repeat" description="ANK 6">
    <location>
        <begin position="214"/>
        <end position="243"/>
    </location>
</feature>
<feature type="domain" description="SAM">
    <location>
        <begin position="272"/>
        <end position="334"/>
    </location>
</feature>
<feature type="region of interest" description="Disordered" evidence="3">
    <location>
        <begin position="1"/>
        <end position="25"/>
    </location>
</feature>
<feature type="modified residue" description="Phosphoserine" evidence="2">
    <location>
        <position position="17"/>
    </location>
</feature>
<feature type="modified residue" description="Phosphoserine" evidence="2">
    <location>
        <position position="18"/>
    </location>
</feature>
<feature type="modified residue" description="Phosphoserine" evidence="2">
    <location>
        <position position="20"/>
    </location>
</feature>
<reference key="1">
    <citation type="journal article" date="2002" name="Mol. Endocrinol.">
        <title>Identification of Gasz, an evolutionarily conserved gene expressed exclusively in germ cells and encoding a protein with four ankyrin repeats, a sterile-alpha motif, and a basic leucine zipper.</title>
        <authorList>
            <person name="Yan W."/>
            <person name="Rajkovic A."/>
            <person name="Viveiros M.M."/>
            <person name="Burns K.H."/>
            <person name="Eppig J.J."/>
            <person name="Matzuk M.M."/>
        </authorList>
    </citation>
    <scope>NUCLEOTIDE SEQUENCE [MRNA]</scope>
</reference>
<reference key="2">
    <citation type="journal article" date="2003" name="Nature">
        <title>Comparative analyses of multi-species sequences from targeted genomic regions.</title>
        <authorList>
            <person name="Thomas J.W."/>
            <person name="Touchman J.W."/>
            <person name="Blakesley R.W."/>
            <person name="Bouffard G.G."/>
            <person name="Beckstrom-Sternberg S.M."/>
            <person name="Margulies E.H."/>
            <person name="Blanchette M."/>
            <person name="Siepel A.C."/>
            <person name="Thomas P.J."/>
            <person name="McDowell J.C."/>
            <person name="Maskeri B."/>
            <person name="Hansen N.F."/>
            <person name="Schwartz M.S."/>
            <person name="Weber R.J."/>
            <person name="Kent W.J."/>
            <person name="Karolchik D."/>
            <person name="Bruen T.C."/>
            <person name="Bevan R."/>
            <person name="Cutler D.J."/>
            <person name="Schwartz S."/>
            <person name="Elnitski L."/>
            <person name="Idol J.R."/>
            <person name="Prasad A.B."/>
            <person name="Lee-Lin S.-Q."/>
            <person name="Maduro V.V.B."/>
            <person name="Summers T.J."/>
            <person name="Portnoy M.E."/>
            <person name="Dietrich N.L."/>
            <person name="Akhter N."/>
            <person name="Ayele K."/>
            <person name="Benjamin B."/>
            <person name="Cariaga K."/>
            <person name="Brinkley C.P."/>
            <person name="Brooks S.Y."/>
            <person name="Granite S."/>
            <person name="Guan X."/>
            <person name="Gupta J."/>
            <person name="Haghighi P."/>
            <person name="Ho S.-L."/>
            <person name="Huang M.C."/>
            <person name="Karlins E."/>
            <person name="Laric P.L."/>
            <person name="Legaspi R."/>
            <person name="Lim M.J."/>
            <person name="Maduro Q.L."/>
            <person name="Masiello C.A."/>
            <person name="Mastrian S.D."/>
            <person name="McCloskey J.C."/>
            <person name="Pearson R."/>
            <person name="Stantripop S."/>
            <person name="Tiongson E.E."/>
            <person name="Tran J.T."/>
            <person name="Tsurgeon C."/>
            <person name="Vogt J.L."/>
            <person name="Walker M.A."/>
            <person name="Wetherby K.D."/>
            <person name="Wiggins L.S."/>
            <person name="Young A.C."/>
            <person name="Zhang L.-H."/>
            <person name="Osoegawa K."/>
            <person name="Zhu B."/>
            <person name="Zhao B."/>
            <person name="Shu C.L."/>
            <person name="De Jong P.J."/>
            <person name="Lawrence C.E."/>
            <person name="Smit A.F."/>
            <person name="Chakravarti A."/>
            <person name="Haussler D."/>
            <person name="Green P."/>
            <person name="Miller W."/>
            <person name="Green E.D."/>
        </authorList>
    </citation>
    <scope>NUCLEOTIDE SEQUENCE [LARGE SCALE GENOMIC DNA]</scope>
</reference>
<evidence type="ECO:0000250" key="1"/>
<evidence type="ECO:0000250" key="2">
    <source>
        <dbReference type="UniProtKB" id="Q8VD46"/>
    </source>
</evidence>
<evidence type="ECO:0000256" key="3">
    <source>
        <dbReference type="SAM" id="MobiDB-lite"/>
    </source>
</evidence>
<comment type="function">
    <text evidence="1">Plays a central role during spermatogenesis by repressing transposable elements and preventing their mobilization, which is essential for the germline integrity. Acts via the piRNA metabolic process, which mediates the repression of transposable elements during meiosis by forming complexes composed of piRNAs and Piwi proteins and governs the methylation and subsequent repression of transposons. Its association with pi-bodies suggests a participation in the primary piRNAs metabolic process. Required prior to the pachytene stage to facilitate the production of multiple types of piRNAs, including those associated with repeats involved in the regulation of retrotransposons. May act by mediating protein-protein interactions during germ cell maturation (By similarity).</text>
</comment>
<comment type="subunit">
    <text evidence="1">Interacts with DDX4, PIWIL1, RANBP9 and TDRD1.</text>
</comment>
<comment type="subcellular location">
    <subcellularLocation>
        <location evidence="1">Cytoplasm</location>
    </subcellularLocation>
    <text evidence="1">Component of the meiotic nuage, also named P granule, a germ-cell-specific organelle required to repress transposon activity during meiosis. Specifically localizes to pi-bodies, a subset of the nuage which contains primary piRNAs (By similarity).</text>
</comment>
<organism>
    <name type="scientific">Bos taurus</name>
    <name type="common">Bovine</name>
    <dbReference type="NCBI Taxonomy" id="9913"/>
    <lineage>
        <taxon>Eukaryota</taxon>
        <taxon>Metazoa</taxon>
        <taxon>Chordata</taxon>
        <taxon>Craniata</taxon>
        <taxon>Vertebrata</taxon>
        <taxon>Euteleostomi</taxon>
        <taxon>Mammalia</taxon>
        <taxon>Eutheria</taxon>
        <taxon>Laurasiatheria</taxon>
        <taxon>Artiodactyla</taxon>
        <taxon>Ruminantia</taxon>
        <taxon>Pecora</taxon>
        <taxon>Bovidae</taxon>
        <taxon>Bovinae</taxon>
        <taxon>Bos</taxon>
    </lineage>
</organism>
<sequence>MAAGPLRGLAVAGGGESSDSEDDGWEIGYLDRKSQKLKGPLPVEERQETFKKALTTGNISLVEELLDSGISVDTSFQYGWTSLMYAASVSNVELVRVLLDRGANASFDKDKQTVLITACSARGSEEKILKCIELLLSRNADPNVACRRLMTPIMYAARDGHPQVVALLVAHGAEVNTQDENGYTALTWAARQGHKNVVLKLLELGANKMIQTKDGKTPSEIAKRNKHLEIFNFLSLTLNPLEGKLHQLTKEESICKLLRTDSDKEKDHIFSSYTAFGDLEIFLHGLGLEHMTDLLKEREITLRHLLTMRKDELAKNGITSRDQQKIMAALKELEVEEIKFGELPEVAKLEISGDEFLNFLLKLNKQCGHLITAVQNIITELPVNSHKIVLEWASPRNFTSVCEELVSNVEDLSEEVCKLKDLIQKLQNERENDPTHIPLMEEVSTWNSRILKRTAITVCGFGFLLFICKLAFQRK</sequence>
<protein>
    <recommendedName>
        <fullName>Ankyrin repeat, SAM and basic leucine zipper domain-containing protein 1</fullName>
    </recommendedName>
    <alternativeName>
        <fullName>Germ cell-specific ankyrin, SAM and basic leucine zipper domain-containing protein</fullName>
    </alternativeName>
</protein>
<accession>Q8WMX8</accession>
<accession>A4D7S1</accession>
<proteinExistence type="evidence at transcript level"/>
<name>ASZ1_BOVIN</name>
<dbReference type="EMBL" id="AF461261">
    <property type="protein sequence ID" value="AAL68817.1"/>
    <property type="molecule type" value="mRNA"/>
</dbReference>
<dbReference type="EMBL" id="DP000008">
    <property type="protein sequence ID" value="AAR16262.1"/>
    <property type="molecule type" value="Genomic_DNA"/>
</dbReference>
<dbReference type="RefSeq" id="NP_776488.1">
    <property type="nucleotide sequence ID" value="NM_174063.2"/>
</dbReference>
<dbReference type="SMR" id="Q8WMX8"/>
<dbReference type="FunCoup" id="Q8WMX8">
    <property type="interactions" value="72"/>
</dbReference>
<dbReference type="STRING" id="9913.ENSBTAP00000000194"/>
<dbReference type="PaxDb" id="9913-ENSBTAP00000000194"/>
<dbReference type="GeneID" id="281184"/>
<dbReference type="KEGG" id="bta:281184"/>
<dbReference type="CTD" id="136991"/>
<dbReference type="VEuPathDB" id="HostDB:ENSBTAG00000000169"/>
<dbReference type="eggNOG" id="KOG0504">
    <property type="taxonomic scope" value="Eukaryota"/>
</dbReference>
<dbReference type="HOGENOM" id="CLU_053259_0_0_1"/>
<dbReference type="InParanoid" id="Q8WMX8"/>
<dbReference type="OMA" id="FVCKLTF"/>
<dbReference type="OrthoDB" id="439236at2759"/>
<dbReference type="TreeFam" id="TF352216"/>
<dbReference type="Proteomes" id="UP000009136">
    <property type="component" value="Chromosome 4"/>
</dbReference>
<dbReference type="Bgee" id="ENSBTAG00000000169">
    <property type="expression patterns" value="Expressed in oocyte and 59 other cell types or tissues"/>
</dbReference>
<dbReference type="GO" id="GO:0071546">
    <property type="term" value="C:pi-body"/>
    <property type="evidence" value="ECO:0000250"/>
    <property type="project" value="UniProtKB"/>
</dbReference>
<dbReference type="GO" id="GO:0030154">
    <property type="term" value="P:cell differentiation"/>
    <property type="evidence" value="ECO:0007669"/>
    <property type="project" value="UniProtKB-KW"/>
</dbReference>
<dbReference type="GO" id="GO:0007140">
    <property type="term" value="P:male meiotic nuclear division"/>
    <property type="evidence" value="ECO:0000250"/>
    <property type="project" value="UniProtKB"/>
</dbReference>
<dbReference type="GO" id="GO:0031047">
    <property type="term" value="P:regulatory ncRNA-mediated gene silencing"/>
    <property type="evidence" value="ECO:0007669"/>
    <property type="project" value="UniProtKB-KW"/>
</dbReference>
<dbReference type="GO" id="GO:0007283">
    <property type="term" value="P:spermatogenesis"/>
    <property type="evidence" value="ECO:0000250"/>
    <property type="project" value="UniProtKB"/>
</dbReference>
<dbReference type="GO" id="GO:0010526">
    <property type="term" value="P:transposable element silencing"/>
    <property type="evidence" value="ECO:0000250"/>
    <property type="project" value="UniProtKB"/>
</dbReference>
<dbReference type="CDD" id="cd09521">
    <property type="entry name" value="SAM_ASZ1"/>
    <property type="match status" value="1"/>
</dbReference>
<dbReference type="FunFam" id="1.25.40.20:FF:000192">
    <property type="entry name" value="Ankyrin repeat, SAM and basic leucine zipper domain-containing 1"/>
    <property type="match status" value="1"/>
</dbReference>
<dbReference type="FunFam" id="1.10.150.50:FF:000060">
    <property type="entry name" value="Ankyrin repeat, SAM and basic leucine zipper domain-containing protein 1"/>
    <property type="match status" value="1"/>
</dbReference>
<dbReference type="Gene3D" id="1.25.40.20">
    <property type="entry name" value="Ankyrin repeat-containing domain"/>
    <property type="match status" value="1"/>
</dbReference>
<dbReference type="Gene3D" id="1.10.150.50">
    <property type="entry name" value="Transcription Factor, Ets-1"/>
    <property type="match status" value="1"/>
</dbReference>
<dbReference type="InterPro" id="IPR002110">
    <property type="entry name" value="Ankyrin_rpt"/>
</dbReference>
<dbReference type="InterPro" id="IPR036770">
    <property type="entry name" value="Ankyrin_rpt-contain_sf"/>
</dbReference>
<dbReference type="InterPro" id="IPR042650">
    <property type="entry name" value="Asz1_SAM"/>
</dbReference>
<dbReference type="InterPro" id="IPR001660">
    <property type="entry name" value="SAM"/>
</dbReference>
<dbReference type="InterPro" id="IPR013761">
    <property type="entry name" value="SAM/pointed_sf"/>
</dbReference>
<dbReference type="PANTHER" id="PTHR24157">
    <property type="entry name" value="ANKYRIN REPEAT, SAM AND BASIC LEUCINE ZIPPER DOMAIN-CONTAINING PROTEIN 1"/>
    <property type="match status" value="1"/>
</dbReference>
<dbReference type="PANTHER" id="PTHR24157:SF3">
    <property type="entry name" value="ANKYRIN REPEAT, SAM AND BASIC LEUCINE ZIPPER DOMAIN-CONTAINING PROTEIN 1"/>
    <property type="match status" value="1"/>
</dbReference>
<dbReference type="Pfam" id="PF12796">
    <property type="entry name" value="Ank_2"/>
    <property type="match status" value="1"/>
</dbReference>
<dbReference type="Pfam" id="PF13637">
    <property type="entry name" value="Ank_4"/>
    <property type="match status" value="1"/>
</dbReference>
<dbReference type="Pfam" id="PF07647">
    <property type="entry name" value="SAM_2"/>
    <property type="match status" value="1"/>
</dbReference>
<dbReference type="SMART" id="SM00248">
    <property type="entry name" value="ANK"/>
    <property type="match status" value="5"/>
</dbReference>
<dbReference type="SUPFAM" id="SSF48403">
    <property type="entry name" value="Ankyrin repeat"/>
    <property type="match status" value="1"/>
</dbReference>
<dbReference type="SUPFAM" id="SSF140860">
    <property type="entry name" value="Pseudo ankyrin repeat-like"/>
    <property type="match status" value="1"/>
</dbReference>
<dbReference type="SUPFAM" id="SSF47769">
    <property type="entry name" value="SAM/Pointed domain"/>
    <property type="match status" value="1"/>
</dbReference>
<dbReference type="PROSITE" id="PS50297">
    <property type="entry name" value="ANK_REP_REGION"/>
    <property type="match status" value="1"/>
</dbReference>
<dbReference type="PROSITE" id="PS50088">
    <property type="entry name" value="ANK_REPEAT"/>
    <property type="match status" value="3"/>
</dbReference>
<gene>
    <name type="primary">ASZ1</name>
    <name type="synonym">GASZ</name>
</gene>
<keyword id="KW-0040">ANK repeat</keyword>
<keyword id="KW-0963">Cytoplasm</keyword>
<keyword id="KW-0217">Developmental protein</keyword>
<keyword id="KW-0221">Differentiation</keyword>
<keyword id="KW-0469">Meiosis</keyword>
<keyword id="KW-0597">Phosphoprotein</keyword>
<keyword id="KW-1185">Reference proteome</keyword>
<keyword id="KW-0677">Repeat</keyword>
<keyword id="KW-0943">RNA-mediated gene silencing</keyword>
<keyword id="KW-0744">Spermatogenesis</keyword>